<protein>
    <recommendedName>
        <fullName evidence="1">Malate synthase G</fullName>
        <ecNumber evidence="1">2.3.3.9</ecNumber>
    </recommendedName>
</protein>
<comment type="function">
    <text evidence="1">Involved in the glycolate utilization. Catalyzes the condensation and subsequent hydrolysis of acetyl-coenzyme A (acetyl-CoA) and glyoxylate to form malate and CoA.</text>
</comment>
<comment type="catalytic activity">
    <reaction evidence="1">
        <text>glyoxylate + acetyl-CoA + H2O = (S)-malate + CoA + H(+)</text>
        <dbReference type="Rhea" id="RHEA:18181"/>
        <dbReference type="ChEBI" id="CHEBI:15377"/>
        <dbReference type="ChEBI" id="CHEBI:15378"/>
        <dbReference type="ChEBI" id="CHEBI:15589"/>
        <dbReference type="ChEBI" id="CHEBI:36655"/>
        <dbReference type="ChEBI" id="CHEBI:57287"/>
        <dbReference type="ChEBI" id="CHEBI:57288"/>
        <dbReference type="EC" id="2.3.3.9"/>
    </reaction>
</comment>
<comment type="cofactor">
    <cofactor evidence="1">
        <name>Mg(2+)</name>
        <dbReference type="ChEBI" id="CHEBI:18420"/>
    </cofactor>
</comment>
<comment type="pathway">
    <text evidence="1">Carbohydrate metabolism; glyoxylate cycle; (S)-malate from isocitrate: step 2/2.</text>
</comment>
<comment type="subunit">
    <text evidence="1">Monomer.</text>
</comment>
<comment type="subcellular location">
    <subcellularLocation>
        <location evidence="1">Cytoplasm</location>
    </subcellularLocation>
</comment>
<comment type="similarity">
    <text evidence="1">Belongs to the malate synthase family. GlcB subfamily.</text>
</comment>
<keyword id="KW-0963">Cytoplasm</keyword>
<keyword id="KW-0329">Glyoxylate bypass</keyword>
<keyword id="KW-0460">Magnesium</keyword>
<keyword id="KW-0479">Metal-binding</keyword>
<keyword id="KW-0558">Oxidation</keyword>
<keyword id="KW-0808">Transferase</keyword>
<keyword id="KW-0816">Tricarboxylic acid cycle</keyword>
<gene>
    <name evidence="1" type="primary">glcB</name>
    <name type="ordered locus">BB0095</name>
</gene>
<dbReference type="EC" id="2.3.3.9" evidence="1"/>
<dbReference type="EMBL" id="BX640437">
    <property type="protein sequence ID" value="CAE30597.1"/>
    <property type="molecule type" value="Genomic_DNA"/>
</dbReference>
<dbReference type="RefSeq" id="WP_010925701.1">
    <property type="nucleotide sequence ID" value="NC_002927.3"/>
</dbReference>
<dbReference type="SMR" id="Q7WR61"/>
<dbReference type="KEGG" id="bbr:BB0095"/>
<dbReference type="eggNOG" id="COG2225">
    <property type="taxonomic scope" value="Bacteria"/>
</dbReference>
<dbReference type="HOGENOM" id="CLU_028446_1_0_4"/>
<dbReference type="UniPathway" id="UPA00703">
    <property type="reaction ID" value="UER00720"/>
</dbReference>
<dbReference type="Proteomes" id="UP000001027">
    <property type="component" value="Chromosome"/>
</dbReference>
<dbReference type="GO" id="GO:0005829">
    <property type="term" value="C:cytosol"/>
    <property type="evidence" value="ECO:0007669"/>
    <property type="project" value="TreeGrafter"/>
</dbReference>
<dbReference type="GO" id="GO:0000287">
    <property type="term" value="F:magnesium ion binding"/>
    <property type="evidence" value="ECO:0007669"/>
    <property type="project" value="TreeGrafter"/>
</dbReference>
<dbReference type="GO" id="GO:0004474">
    <property type="term" value="F:malate synthase activity"/>
    <property type="evidence" value="ECO:0007669"/>
    <property type="project" value="UniProtKB-UniRule"/>
</dbReference>
<dbReference type="GO" id="GO:0009436">
    <property type="term" value="P:glyoxylate catabolic process"/>
    <property type="evidence" value="ECO:0007669"/>
    <property type="project" value="TreeGrafter"/>
</dbReference>
<dbReference type="GO" id="GO:0006097">
    <property type="term" value="P:glyoxylate cycle"/>
    <property type="evidence" value="ECO:0007669"/>
    <property type="project" value="UniProtKB-UniRule"/>
</dbReference>
<dbReference type="GO" id="GO:0006099">
    <property type="term" value="P:tricarboxylic acid cycle"/>
    <property type="evidence" value="ECO:0007669"/>
    <property type="project" value="UniProtKB-KW"/>
</dbReference>
<dbReference type="FunFam" id="3.20.20.360:FF:000002">
    <property type="entry name" value="Malate synthase G"/>
    <property type="match status" value="1"/>
</dbReference>
<dbReference type="Gene3D" id="3.20.20.360">
    <property type="entry name" value="Malate synthase, domain 3"/>
    <property type="match status" value="2"/>
</dbReference>
<dbReference type="Gene3D" id="1.20.1220.12">
    <property type="entry name" value="Malate synthase, domain III"/>
    <property type="match status" value="1"/>
</dbReference>
<dbReference type="HAMAP" id="MF_00641">
    <property type="entry name" value="Malate_synth_G"/>
    <property type="match status" value="1"/>
</dbReference>
<dbReference type="InterPro" id="IPR044856">
    <property type="entry name" value="Malate_synth_C_sf"/>
</dbReference>
<dbReference type="InterPro" id="IPR011076">
    <property type="entry name" value="Malate_synth_sf"/>
</dbReference>
<dbReference type="InterPro" id="IPR001465">
    <property type="entry name" value="Malate_synthase_TIM"/>
</dbReference>
<dbReference type="InterPro" id="IPR006253">
    <property type="entry name" value="Malate_synthG"/>
</dbReference>
<dbReference type="InterPro" id="IPR048355">
    <property type="entry name" value="MS_C"/>
</dbReference>
<dbReference type="InterPro" id="IPR048356">
    <property type="entry name" value="MS_N"/>
</dbReference>
<dbReference type="InterPro" id="IPR046363">
    <property type="entry name" value="MS_N_TIM-barrel_dom"/>
</dbReference>
<dbReference type="InterPro" id="IPR048357">
    <property type="entry name" value="MSG_insertion"/>
</dbReference>
<dbReference type="NCBIfam" id="TIGR01345">
    <property type="entry name" value="malate_syn_G"/>
    <property type="match status" value="1"/>
</dbReference>
<dbReference type="NCBIfam" id="NF002825">
    <property type="entry name" value="PRK02999.1"/>
    <property type="match status" value="1"/>
</dbReference>
<dbReference type="PANTHER" id="PTHR42739">
    <property type="entry name" value="MALATE SYNTHASE G"/>
    <property type="match status" value="1"/>
</dbReference>
<dbReference type="PANTHER" id="PTHR42739:SF1">
    <property type="entry name" value="MALATE SYNTHASE G"/>
    <property type="match status" value="1"/>
</dbReference>
<dbReference type="Pfam" id="PF20659">
    <property type="entry name" value="MS_C"/>
    <property type="match status" value="1"/>
</dbReference>
<dbReference type="Pfam" id="PF20656">
    <property type="entry name" value="MS_N"/>
    <property type="match status" value="1"/>
</dbReference>
<dbReference type="Pfam" id="PF01274">
    <property type="entry name" value="MS_TIM-barrel"/>
    <property type="match status" value="1"/>
</dbReference>
<dbReference type="Pfam" id="PF20658">
    <property type="entry name" value="MSG_insertion"/>
    <property type="match status" value="1"/>
</dbReference>
<dbReference type="SUPFAM" id="SSF51645">
    <property type="entry name" value="Malate synthase G"/>
    <property type="match status" value="1"/>
</dbReference>
<evidence type="ECO:0000255" key="1">
    <source>
        <dbReference type="HAMAP-Rule" id="MF_00641"/>
    </source>
</evidence>
<proteinExistence type="inferred from homology"/>
<organism>
    <name type="scientific">Bordetella bronchiseptica (strain ATCC BAA-588 / NCTC 13252 / RB50)</name>
    <name type="common">Alcaligenes bronchisepticus</name>
    <dbReference type="NCBI Taxonomy" id="257310"/>
    <lineage>
        <taxon>Bacteria</taxon>
        <taxon>Pseudomonadati</taxon>
        <taxon>Pseudomonadota</taxon>
        <taxon>Betaproteobacteria</taxon>
        <taxon>Burkholderiales</taxon>
        <taxon>Alcaligenaceae</taxon>
        <taxon>Bordetella</taxon>
    </lineage>
</organism>
<name>MASZ_BORBR</name>
<sequence length="725" mass="78547">MTERIPHHGLQVAASLHRFIEDEALSGSGLAPDEFWAGFAALVRDLAPRNRELLAERDRLQGEIDAWHRAHPGPVRDSAGYQALLERIGYLQPQPAQVTASTRDVDSEIASQAGPQLVVPVSNARYALNAANARWGSLYDALYGTDAIPPVAGDDGKGYNPARGEAVIARARAFLDEAAPLAQGSHADATAYAIEGGKLAVTLGAGQRTGLRNPAQLAGYQGDASQPAAVLLANNGLHFEIQIDRQHQIGATDAAGVKDVLLEAALTTIMDCEDSVAAVDADDKVLIYRNWLGLMKGDLSESVTKGGKTFTRRLNADRQYHKPDGGTLTLHGRSLMFVRNVGHLMTNPAILDEQGNEVPEGILDAVITSLAALPDRANRLNSRTGSIYIVKPKMHGPAEAAFANELFDRVEDLLKLPRHTIKMGIMDEERRTSVNLKACIAAAAARVAFINTGFLDRTGDEMHTGMEAGPMLRKGDMKSSAWITAYERNNVLVGLDCGLRGRAQIGKGMWAMPDMMAAMLEQKIGHPKAGANTAWVPSPTAATLHAMHYHQVDVAAVQQALEQTRYDSVRDELLAGLLTVPVGDPAAWSADDIQRELDNNAQGILGYVVRWIDQGVGCSKVPDINNVGLMEDRATLRISSQHIANWLRHGIVDRAQVNATFERMAKVVDQQNAGDPNYLPMAGHFDTSFAYRAACALVFEGLTQPNGYTEPLLHEYRQAFKAAQR</sequence>
<accession>Q7WR61</accession>
<feature type="chain" id="PRO_1000056893" description="Malate synthase G">
    <location>
        <begin position="1"/>
        <end position="725"/>
    </location>
</feature>
<feature type="active site" description="Proton acceptor" evidence="1">
    <location>
        <position position="339"/>
    </location>
</feature>
<feature type="active site" description="Proton donor" evidence="1">
    <location>
        <position position="632"/>
    </location>
</feature>
<feature type="binding site" evidence="1">
    <location>
        <position position="118"/>
    </location>
    <ligand>
        <name>acetyl-CoA</name>
        <dbReference type="ChEBI" id="CHEBI:57288"/>
    </ligand>
</feature>
<feature type="binding site" evidence="1">
    <location>
        <begin position="125"/>
        <end position="126"/>
    </location>
    <ligand>
        <name>acetyl-CoA</name>
        <dbReference type="ChEBI" id="CHEBI:57288"/>
    </ligand>
</feature>
<feature type="binding site" evidence="1">
    <location>
        <position position="275"/>
    </location>
    <ligand>
        <name>acetyl-CoA</name>
        <dbReference type="ChEBI" id="CHEBI:57288"/>
    </ligand>
</feature>
<feature type="binding site" evidence="1">
    <location>
        <position position="312"/>
    </location>
    <ligand>
        <name>acetyl-CoA</name>
        <dbReference type="ChEBI" id="CHEBI:57288"/>
    </ligand>
</feature>
<feature type="binding site" evidence="1">
    <location>
        <position position="339"/>
    </location>
    <ligand>
        <name>glyoxylate</name>
        <dbReference type="ChEBI" id="CHEBI:36655"/>
    </ligand>
</feature>
<feature type="binding site" evidence="1">
    <location>
        <position position="428"/>
    </location>
    <ligand>
        <name>glyoxylate</name>
        <dbReference type="ChEBI" id="CHEBI:36655"/>
    </ligand>
</feature>
<feature type="binding site" evidence="1">
    <location>
        <position position="428"/>
    </location>
    <ligand>
        <name>Mg(2+)</name>
        <dbReference type="ChEBI" id="CHEBI:18420"/>
    </ligand>
</feature>
<feature type="binding site" evidence="1">
    <location>
        <begin position="453"/>
        <end position="456"/>
    </location>
    <ligand>
        <name>glyoxylate</name>
        <dbReference type="ChEBI" id="CHEBI:36655"/>
    </ligand>
</feature>
<feature type="binding site" evidence="1">
    <location>
        <position position="456"/>
    </location>
    <ligand>
        <name>Mg(2+)</name>
        <dbReference type="ChEBI" id="CHEBI:18420"/>
    </ligand>
</feature>
<feature type="binding site" evidence="1">
    <location>
        <position position="537"/>
    </location>
    <ligand>
        <name>acetyl-CoA</name>
        <dbReference type="ChEBI" id="CHEBI:57288"/>
    </ligand>
</feature>
<feature type="modified residue" description="Cysteine sulfenic acid (-SOH)" evidence="1">
    <location>
        <position position="618"/>
    </location>
</feature>
<reference key="1">
    <citation type="journal article" date="2003" name="Nat. Genet.">
        <title>Comparative analysis of the genome sequences of Bordetella pertussis, Bordetella parapertussis and Bordetella bronchiseptica.</title>
        <authorList>
            <person name="Parkhill J."/>
            <person name="Sebaihia M."/>
            <person name="Preston A."/>
            <person name="Murphy L.D."/>
            <person name="Thomson N.R."/>
            <person name="Harris D.E."/>
            <person name="Holden M.T.G."/>
            <person name="Churcher C.M."/>
            <person name="Bentley S.D."/>
            <person name="Mungall K.L."/>
            <person name="Cerdeno-Tarraga A.-M."/>
            <person name="Temple L."/>
            <person name="James K.D."/>
            <person name="Harris B."/>
            <person name="Quail M.A."/>
            <person name="Achtman M."/>
            <person name="Atkin R."/>
            <person name="Baker S."/>
            <person name="Basham D."/>
            <person name="Bason N."/>
            <person name="Cherevach I."/>
            <person name="Chillingworth T."/>
            <person name="Collins M."/>
            <person name="Cronin A."/>
            <person name="Davis P."/>
            <person name="Doggett J."/>
            <person name="Feltwell T."/>
            <person name="Goble A."/>
            <person name="Hamlin N."/>
            <person name="Hauser H."/>
            <person name="Holroyd S."/>
            <person name="Jagels K."/>
            <person name="Leather S."/>
            <person name="Moule S."/>
            <person name="Norberczak H."/>
            <person name="O'Neil S."/>
            <person name="Ormond D."/>
            <person name="Price C."/>
            <person name="Rabbinowitsch E."/>
            <person name="Rutter S."/>
            <person name="Sanders M."/>
            <person name="Saunders D."/>
            <person name="Seeger K."/>
            <person name="Sharp S."/>
            <person name="Simmonds M."/>
            <person name="Skelton J."/>
            <person name="Squares R."/>
            <person name="Squares S."/>
            <person name="Stevens K."/>
            <person name="Unwin L."/>
            <person name="Whitehead S."/>
            <person name="Barrell B.G."/>
            <person name="Maskell D.J."/>
        </authorList>
    </citation>
    <scope>NUCLEOTIDE SEQUENCE [LARGE SCALE GENOMIC DNA]</scope>
    <source>
        <strain>ATCC BAA-588 / NCTC 13252 / RB50</strain>
    </source>
</reference>